<keyword id="KW-0378">Hydrolase</keyword>
<keyword id="KW-0479">Metal-binding</keyword>
<keyword id="KW-0862">Zinc</keyword>
<feature type="chain" id="PRO_1000144790" description="Hydroxyacylglutathione hydrolase">
    <location>
        <begin position="1"/>
        <end position="259"/>
    </location>
</feature>
<feature type="region of interest" description="Disordered" evidence="2">
    <location>
        <begin position="220"/>
        <end position="243"/>
    </location>
</feature>
<feature type="compositionally biased region" description="Basic and acidic residues" evidence="2">
    <location>
        <begin position="229"/>
        <end position="239"/>
    </location>
</feature>
<feature type="binding site" evidence="1">
    <location>
        <position position="56"/>
    </location>
    <ligand>
        <name>Zn(2+)</name>
        <dbReference type="ChEBI" id="CHEBI:29105"/>
        <label>1</label>
    </ligand>
</feature>
<feature type="binding site" evidence="1">
    <location>
        <position position="58"/>
    </location>
    <ligand>
        <name>Zn(2+)</name>
        <dbReference type="ChEBI" id="CHEBI:29105"/>
        <label>1</label>
    </ligand>
</feature>
<feature type="binding site" evidence="1">
    <location>
        <position position="60"/>
    </location>
    <ligand>
        <name>Zn(2+)</name>
        <dbReference type="ChEBI" id="CHEBI:29105"/>
        <label>2</label>
    </ligand>
</feature>
<feature type="binding site" evidence="1">
    <location>
        <position position="61"/>
    </location>
    <ligand>
        <name>Zn(2+)</name>
        <dbReference type="ChEBI" id="CHEBI:29105"/>
        <label>2</label>
    </ligand>
</feature>
<feature type="binding site" evidence="1">
    <location>
        <position position="112"/>
    </location>
    <ligand>
        <name>Zn(2+)</name>
        <dbReference type="ChEBI" id="CHEBI:29105"/>
        <label>1</label>
    </ligand>
</feature>
<feature type="binding site" evidence="1">
    <location>
        <position position="133"/>
    </location>
    <ligand>
        <name>Zn(2+)</name>
        <dbReference type="ChEBI" id="CHEBI:29105"/>
        <label>1</label>
    </ligand>
</feature>
<feature type="binding site" evidence="1">
    <location>
        <position position="133"/>
    </location>
    <ligand>
        <name>Zn(2+)</name>
        <dbReference type="ChEBI" id="CHEBI:29105"/>
        <label>2</label>
    </ligand>
</feature>
<feature type="binding site" evidence="1">
    <location>
        <position position="171"/>
    </location>
    <ligand>
        <name>Zn(2+)</name>
        <dbReference type="ChEBI" id="CHEBI:29105"/>
        <label>2</label>
    </ligand>
</feature>
<sequence length="259" mass="28636">MIQIHALPAFNDNYIWLLQDLSSQQCAVVDPGDAKPVLGWLAQNPDYRLTDILITHHHNDHVGGVAELKQSTAARVLGPAAETIPARDIALVDNDRMTVLGLEFVVHAVPGHTLGHIAFYHEDATTPLLFSGDTLFAAGCGRLFEGTPQQMHDSLGRLAKLPDSTLIYCAHEYTLSNLRFAQAVEPANVDIAERLAEVTRWRSENRISLPSNMALEKRTNPFLRTGETSVKEKADERSDAQNTSQSAVFASLRAWKDKF</sequence>
<evidence type="ECO:0000255" key="1">
    <source>
        <dbReference type="HAMAP-Rule" id="MF_01374"/>
    </source>
</evidence>
<evidence type="ECO:0000256" key="2">
    <source>
        <dbReference type="SAM" id="MobiDB-lite"/>
    </source>
</evidence>
<proteinExistence type="inferred from homology"/>
<organism>
    <name type="scientific">Pseudomonas syringae pv. syringae (strain B728a)</name>
    <dbReference type="NCBI Taxonomy" id="205918"/>
    <lineage>
        <taxon>Bacteria</taxon>
        <taxon>Pseudomonadati</taxon>
        <taxon>Pseudomonadota</taxon>
        <taxon>Gammaproteobacteria</taxon>
        <taxon>Pseudomonadales</taxon>
        <taxon>Pseudomonadaceae</taxon>
        <taxon>Pseudomonas</taxon>
        <taxon>Pseudomonas syringae</taxon>
    </lineage>
</organism>
<protein>
    <recommendedName>
        <fullName evidence="1">Hydroxyacylglutathione hydrolase</fullName>
        <ecNumber evidence="1">3.1.2.6</ecNumber>
    </recommendedName>
    <alternativeName>
        <fullName evidence="1">Glyoxalase II</fullName>
        <shortName evidence="1">Glx II</shortName>
    </alternativeName>
</protein>
<gene>
    <name evidence="1" type="primary">gloB</name>
    <name type="ordered locus">Psyr_1761</name>
</gene>
<reference key="1">
    <citation type="journal article" date="2005" name="Proc. Natl. Acad. Sci. U.S.A.">
        <title>Comparison of the complete genome sequences of Pseudomonas syringae pv. syringae B728a and pv. tomato DC3000.</title>
        <authorList>
            <person name="Feil H."/>
            <person name="Feil W.S."/>
            <person name="Chain P."/>
            <person name="Larimer F."/>
            <person name="Dibartolo G."/>
            <person name="Copeland A."/>
            <person name="Lykidis A."/>
            <person name="Trong S."/>
            <person name="Nolan M."/>
            <person name="Goltsman E."/>
            <person name="Thiel J."/>
            <person name="Malfatti S."/>
            <person name="Loper J.E."/>
            <person name="Lapidus A."/>
            <person name="Detter J.C."/>
            <person name="Land M."/>
            <person name="Richardson P.M."/>
            <person name="Kyrpides N.C."/>
            <person name="Ivanova N."/>
            <person name="Lindow S.E."/>
        </authorList>
    </citation>
    <scope>NUCLEOTIDE SEQUENCE [LARGE SCALE GENOMIC DNA]</scope>
    <source>
        <strain>B728a</strain>
    </source>
</reference>
<name>GLO2_PSEU2</name>
<comment type="function">
    <text evidence="1">Thiolesterase that catalyzes the hydrolysis of S-D-lactoyl-glutathione to form glutathione and D-lactic acid.</text>
</comment>
<comment type="catalytic activity">
    <reaction evidence="1">
        <text>an S-(2-hydroxyacyl)glutathione + H2O = a 2-hydroxy carboxylate + glutathione + H(+)</text>
        <dbReference type="Rhea" id="RHEA:21864"/>
        <dbReference type="ChEBI" id="CHEBI:15377"/>
        <dbReference type="ChEBI" id="CHEBI:15378"/>
        <dbReference type="ChEBI" id="CHEBI:57925"/>
        <dbReference type="ChEBI" id="CHEBI:58896"/>
        <dbReference type="ChEBI" id="CHEBI:71261"/>
        <dbReference type="EC" id="3.1.2.6"/>
    </reaction>
</comment>
<comment type="cofactor">
    <cofactor evidence="1">
        <name>Zn(2+)</name>
        <dbReference type="ChEBI" id="CHEBI:29105"/>
    </cofactor>
    <text evidence="1">Binds 2 Zn(2+) ions per subunit.</text>
</comment>
<comment type="pathway">
    <text evidence="1">Secondary metabolite metabolism; methylglyoxal degradation; (R)-lactate from methylglyoxal: step 2/2.</text>
</comment>
<comment type="subunit">
    <text evidence="1">Monomer.</text>
</comment>
<comment type="similarity">
    <text evidence="1">Belongs to the metallo-beta-lactamase superfamily. Glyoxalase II family.</text>
</comment>
<dbReference type="EC" id="3.1.2.6" evidence="1"/>
<dbReference type="EMBL" id="CP000075">
    <property type="protein sequence ID" value="AAY36809.1"/>
    <property type="molecule type" value="Genomic_DNA"/>
</dbReference>
<dbReference type="RefSeq" id="WP_011267224.1">
    <property type="nucleotide sequence ID" value="NC_007005.1"/>
</dbReference>
<dbReference type="RefSeq" id="YP_234847.1">
    <property type="nucleotide sequence ID" value="NC_007005.1"/>
</dbReference>
<dbReference type="SMR" id="Q4ZVL3"/>
<dbReference type="STRING" id="205918.Psyr_1761"/>
<dbReference type="KEGG" id="psb:Psyr_1761"/>
<dbReference type="PATRIC" id="fig|205918.7.peg.1799"/>
<dbReference type="eggNOG" id="COG0491">
    <property type="taxonomic scope" value="Bacteria"/>
</dbReference>
<dbReference type="HOGENOM" id="CLU_030571_4_1_6"/>
<dbReference type="OrthoDB" id="9802248at2"/>
<dbReference type="UniPathway" id="UPA00619">
    <property type="reaction ID" value="UER00676"/>
</dbReference>
<dbReference type="Proteomes" id="UP000000426">
    <property type="component" value="Chromosome"/>
</dbReference>
<dbReference type="GO" id="GO:0004416">
    <property type="term" value="F:hydroxyacylglutathione hydrolase activity"/>
    <property type="evidence" value="ECO:0007669"/>
    <property type="project" value="UniProtKB-UniRule"/>
</dbReference>
<dbReference type="GO" id="GO:0046872">
    <property type="term" value="F:metal ion binding"/>
    <property type="evidence" value="ECO:0007669"/>
    <property type="project" value="UniProtKB-KW"/>
</dbReference>
<dbReference type="GO" id="GO:0019243">
    <property type="term" value="P:methylglyoxal catabolic process to D-lactate via S-lactoyl-glutathione"/>
    <property type="evidence" value="ECO:0007669"/>
    <property type="project" value="InterPro"/>
</dbReference>
<dbReference type="CDD" id="cd07723">
    <property type="entry name" value="hydroxyacylglutathione_hydrolase_MBL-fold"/>
    <property type="match status" value="1"/>
</dbReference>
<dbReference type="Gene3D" id="3.60.15.10">
    <property type="entry name" value="Ribonuclease Z/Hydroxyacylglutathione hydrolase-like"/>
    <property type="match status" value="1"/>
</dbReference>
<dbReference type="HAMAP" id="MF_01374">
    <property type="entry name" value="Glyoxalase_2"/>
    <property type="match status" value="1"/>
</dbReference>
<dbReference type="InterPro" id="IPR035680">
    <property type="entry name" value="Clx_II_MBL"/>
</dbReference>
<dbReference type="InterPro" id="IPR050110">
    <property type="entry name" value="Glyoxalase_II_hydrolase"/>
</dbReference>
<dbReference type="InterPro" id="IPR032282">
    <property type="entry name" value="HAGH_C"/>
</dbReference>
<dbReference type="InterPro" id="IPR017782">
    <property type="entry name" value="Hydroxyacylglutathione_Hdrlase"/>
</dbReference>
<dbReference type="InterPro" id="IPR001279">
    <property type="entry name" value="Metallo-B-lactamas"/>
</dbReference>
<dbReference type="InterPro" id="IPR036866">
    <property type="entry name" value="RibonucZ/Hydroxyglut_hydro"/>
</dbReference>
<dbReference type="NCBIfam" id="TIGR03413">
    <property type="entry name" value="GSH_gloB"/>
    <property type="match status" value="1"/>
</dbReference>
<dbReference type="PANTHER" id="PTHR43705">
    <property type="entry name" value="HYDROXYACYLGLUTATHIONE HYDROLASE"/>
    <property type="match status" value="1"/>
</dbReference>
<dbReference type="PANTHER" id="PTHR43705:SF1">
    <property type="entry name" value="HYDROXYACYLGLUTATHIONE HYDROLASE GLOB"/>
    <property type="match status" value="1"/>
</dbReference>
<dbReference type="Pfam" id="PF16123">
    <property type="entry name" value="HAGH_C"/>
    <property type="match status" value="1"/>
</dbReference>
<dbReference type="Pfam" id="PF00753">
    <property type="entry name" value="Lactamase_B"/>
    <property type="match status" value="1"/>
</dbReference>
<dbReference type="PIRSF" id="PIRSF005457">
    <property type="entry name" value="Glx"/>
    <property type="match status" value="1"/>
</dbReference>
<dbReference type="SMART" id="SM00849">
    <property type="entry name" value="Lactamase_B"/>
    <property type="match status" value="1"/>
</dbReference>
<dbReference type="SUPFAM" id="SSF56281">
    <property type="entry name" value="Metallo-hydrolase/oxidoreductase"/>
    <property type="match status" value="1"/>
</dbReference>
<accession>Q4ZVL3</accession>